<organism>
    <name type="scientific">Xanthomonas campestris pv. campestris (strain 8004)</name>
    <dbReference type="NCBI Taxonomy" id="314565"/>
    <lineage>
        <taxon>Bacteria</taxon>
        <taxon>Pseudomonadati</taxon>
        <taxon>Pseudomonadota</taxon>
        <taxon>Gammaproteobacteria</taxon>
        <taxon>Lysobacterales</taxon>
        <taxon>Lysobacteraceae</taxon>
        <taxon>Xanthomonas</taxon>
    </lineage>
</organism>
<gene>
    <name evidence="1" type="primary">truD</name>
    <name type="ordered locus">XC_2527</name>
</gene>
<sequence>MSDSPVLPRAHGAAVLTAAMRSVAEDFQVDELPAFDASGEGEHLLLTVRKRGQNTAYVAKRLAQWAGIAEMGIGYAGLKDRHAVTTQRFSVHLPKRIAPDLSALDDDDMQVVEHTWHNRKLQRGALHGNRFVLTLREVVGDQAVIDARLHAIAARGIPNWFGEQRFGRDGGNVAAALAMFGHTRQPDGTLAPAPKRRLRNDQRSLLLSAARSALFNQVLTARVEQGNWDAPLDGEAWMLDGSRSVFGPEPWSEVLAERLARFDIHPSGPLWGAGELRCSADAAAIEQAALSDPQSLALRTGLEAAGLKQERRALRLRPQGLAHAWLDAQTLQLTFALPPGCYATAVLWELGEVVDAARVAPQSRSEG</sequence>
<keyword id="KW-0413">Isomerase</keyword>
<keyword id="KW-0819">tRNA processing</keyword>
<proteinExistence type="inferred from homology"/>
<evidence type="ECO:0000255" key="1">
    <source>
        <dbReference type="HAMAP-Rule" id="MF_01082"/>
    </source>
</evidence>
<name>TRUD_XANC8</name>
<comment type="function">
    <text evidence="1">Responsible for synthesis of pseudouridine from uracil-13 in transfer RNAs.</text>
</comment>
<comment type="catalytic activity">
    <reaction evidence="1">
        <text>uridine(13) in tRNA = pseudouridine(13) in tRNA</text>
        <dbReference type="Rhea" id="RHEA:42540"/>
        <dbReference type="Rhea" id="RHEA-COMP:10105"/>
        <dbReference type="Rhea" id="RHEA-COMP:10106"/>
        <dbReference type="ChEBI" id="CHEBI:65314"/>
        <dbReference type="ChEBI" id="CHEBI:65315"/>
        <dbReference type="EC" id="5.4.99.27"/>
    </reaction>
</comment>
<comment type="similarity">
    <text evidence="1">Belongs to the pseudouridine synthase TruD family.</text>
</comment>
<dbReference type="EC" id="5.4.99.27" evidence="1"/>
<dbReference type="EMBL" id="CP000050">
    <property type="protein sequence ID" value="AAY49577.1"/>
    <property type="molecule type" value="Genomic_DNA"/>
</dbReference>
<dbReference type="RefSeq" id="WP_011036881.1">
    <property type="nucleotide sequence ID" value="NZ_CP155948.1"/>
</dbReference>
<dbReference type="SMR" id="Q4UTP6"/>
<dbReference type="KEGG" id="xcb:XC_2527"/>
<dbReference type="HOGENOM" id="CLU_005281_4_0_6"/>
<dbReference type="Proteomes" id="UP000000420">
    <property type="component" value="Chromosome"/>
</dbReference>
<dbReference type="GO" id="GO:0005829">
    <property type="term" value="C:cytosol"/>
    <property type="evidence" value="ECO:0007669"/>
    <property type="project" value="TreeGrafter"/>
</dbReference>
<dbReference type="GO" id="GO:0003723">
    <property type="term" value="F:RNA binding"/>
    <property type="evidence" value="ECO:0007669"/>
    <property type="project" value="InterPro"/>
</dbReference>
<dbReference type="GO" id="GO:0160150">
    <property type="term" value="F:tRNA pseudouridine(13) synthase activity"/>
    <property type="evidence" value="ECO:0007669"/>
    <property type="project" value="UniProtKB-EC"/>
</dbReference>
<dbReference type="GO" id="GO:0031119">
    <property type="term" value="P:tRNA pseudouridine synthesis"/>
    <property type="evidence" value="ECO:0007669"/>
    <property type="project" value="UniProtKB-UniRule"/>
</dbReference>
<dbReference type="CDD" id="cd02575">
    <property type="entry name" value="PseudoU_synth_EcTruD"/>
    <property type="match status" value="1"/>
</dbReference>
<dbReference type="Gene3D" id="3.30.2350.20">
    <property type="entry name" value="TruD, catalytic domain"/>
    <property type="match status" value="1"/>
</dbReference>
<dbReference type="Gene3D" id="3.30.2340.10">
    <property type="entry name" value="TruD, insertion domain"/>
    <property type="match status" value="1"/>
</dbReference>
<dbReference type="HAMAP" id="MF_01082">
    <property type="entry name" value="TruD"/>
    <property type="match status" value="1"/>
</dbReference>
<dbReference type="InterPro" id="IPR020103">
    <property type="entry name" value="PsdUridine_synth_cat_dom_sf"/>
</dbReference>
<dbReference type="InterPro" id="IPR001656">
    <property type="entry name" value="PsdUridine_synth_TruD"/>
</dbReference>
<dbReference type="InterPro" id="IPR020119">
    <property type="entry name" value="PsdUridine_synth_TruD_CS"/>
</dbReference>
<dbReference type="InterPro" id="IPR011760">
    <property type="entry name" value="PsdUridine_synth_TruD_insert"/>
</dbReference>
<dbReference type="InterPro" id="IPR042214">
    <property type="entry name" value="TruD_catalytic"/>
</dbReference>
<dbReference type="InterPro" id="IPR043165">
    <property type="entry name" value="TruD_insert_sf"/>
</dbReference>
<dbReference type="InterPro" id="IPR050170">
    <property type="entry name" value="TruD_pseudoU_synthase"/>
</dbReference>
<dbReference type="NCBIfam" id="NF002153">
    <property type="entry name" value="PRK00984.1-2"/>
    <property type="match status" value="1"/>
</dbReference>
<dbReference type="PANTHER" id="PTHR47811">
    <property type="entry name" value="TRNA PSEUDOURIDINE SYNTHASE D"/>
    <property type="match status" value="1"/>
</dbReference>
<dbReference type="PANTHER" id="PTHR47811:SF1">
    <property type="entry name" value="TRNA PSEUDOURIDINE SYNTHASE D"/>
    <property type="match status" value="1"/>
</dbReference>
<dbReference type="Pfam" id="PF01142">
    <property type="entry name" value="TruD"/>
    <property type="match status" value="2"/>
</dbReference>
<dbReference type="SUPFAM" id="SSF55120">
    <property type="entry name" value="Pseudouridine synthase"/>
    <property type="match status" value="1"/>
</dbReference>
<dbReference type="PROSITE" id="PS50984">
    <property type="entry name" value="TRUD"/>
    <property type="match status" value="1"/>
</dbReference>
<dbReference type="PROSITE" id="PS01268">
    <property type="entry name" value="UPF0024"/>
    <property type="match status" value="1"/>
</dbReference>
<protein>
    <recommendedName>
        <fullName evidence="1">tRNA pseudouridine synthase D</fullName>
        <ecNumber evidence="1">5.4.99.27</ecNumber>
    </recommendedName>
    <alternativeName>
        <fullName evidence="1">tRNA pseudouridine(13) synthase</fullName>
    </alternativeName>
    <alternativeName>
        <fullName evidence="1">tRNA pseudouridylate synthase D</fullName>
    </alternativeName>
    <alternativeName>
        <fullName evidence="1">tRNA-uridine isomerase D</fullName>
    </alternativeName>
</protein>
<reference key="1">
    <citation type="journal article" date="2005" name="Genome Res.">
        <title>Comparative and functional genomic analyses of the pathogenicity of phytopathogen Xanthomonas campestris pv. campestris.</title>
        <authorList>
            <person name="Qian W."/>
            <person name="Jia Y."/>
            <person name="Ren S.-X."/>
            <person name="He Y.-Q."/>
            <person name="Feng J.-X."/>
            <person name="Lu L.-F."/>
            <person name="Sun Q."/>
            <person name="Ying G."/>
            <person name="Tang D.-J."/>
            <person name="Tang H."/>
            <person name="Wu W."/>
            <person name="Hao P."/>
            <person name="Wang L."/>
            <person name="Jiang B.-L."/>
            <person name="Zeng S."/>
            <person name="Gu W.-Y."/>
            <person name="Lu G."/>
            <person name="Rong L."/>
            <person name="Tian Y."/>
            <person name="Yao Z."/>
            <person name="Fu G."/>
            <person name="Chen B."/>
            <person name="Fang R."/>
            <person name="Qiang B."/>
            <person name="Chen Z."/>
            <person name="Zhao G.-P."/>
            <person name="Tang J.-L."/>
            <person name="He C."/>
        </authorList>
    </citation>
    <scope>NUCLEOTIDE SEQUENCE [LARGE SCALE GENOMIC DNA]</scope>
    <source>
        <strain>8004</strain>
    </source>
</reference>
<accession>Q4UTP6</accession>
<feature type="chain" id="PRO_0000230156" description="tRNA pseudouridine synthase D">
    <location>
        <begin position="1"/>
        <end position="367"/>
    </location>
</feature>
<feature type="domain" description="TRUD" evidence="1">
    <location>
        <begin position="156"/>
        <end position="316"/>
    </location>
</feature>
<feature type="active site" description="Nucleophile" evidence="1">
    <location>
        <position position="80"/>
    </location>
</feature>